<organism>
    <name type="scientific">Agrobacterium fabrum (strain C58 / ATCC 33970)</name>
    <name type="common">Agrobacterium tumefaciens (strain C58)</name>
    <dbReference type="NCBI Taxonomy" id="176299"/>
    <lineage>
        <taxon>Bacteria</taxon>
        <taxon>Pseudomonadati</taxon>
        <taxon>Pseudomonadota</taxon>
        <taxon>Alphaproteobacteria</taxon>
        <taxon>Hyphomicrobiales</taxon>
        <taxon>Rhizobiaceae</taxon>
        <taxon>Rhizobium/Agrobacterium group</taxon>
        <taxon>Agrobacterium</taxon>
        <taxon>Agrobacterium tumefaciens complex</taxon>
    </lineage>
</organism>
<keyword id="KW-0450">Lipoyl</keyword>
<keyword id="KW-1185">Reference proteome</keyword>
<proteinExistence type="inferred from homology"/>
<gene>
    <name evidence="1" type="primary">gcvH</name>
    <name type="ordered locus">Atu1463</name>
    <name type="ORF">AGR_C_2700</name>
</gene>
<sequence>MLKFTAEHEWLKFEGDIATVGITSHAAEQLGDLVFVELPEVGATFAKDGDAATVESVKAASDVYCPLDGEVVEINQAIVDDPSLVNSDPQGAGWFFKLKLSNAADAETLLDEAAYKELIA</sequence>
<evidence type="ECO:0000255" key="1">
    <source>
        <dbReference type="HAMAP-Rule" id="MF_00272"/>
    </source>
</evidence>
<evidence type="ECO:0000255" key="2">
    <source>
        <dbReference type="PROSITE-ProRule" id="PRU01066"/>
    </source>
</evidence>
<feature type="chain" id="PRO_0000166195" description="Glycine cleavage system H protein">
    <location>
        <begin position="1"/>
        <end position="120"/>
    </location>
</feature>
<feature type="domain" description="Lipoyl-binding" evidence="2">
    <location>
        <begin position="17"/>
        <end position="99"/>
    </location>
</feature>
<feature type="modified residue" description="N6-lipoyllysine" evidence="1">
    <location>
        <position position="58"/>
    </location>
</feature>
<reference key="1">
    <citation type="journal article" date="2001" name="Science">
        <title>The genome of the natural genetic engineer Agrobacterium tumefaciens C58.</title>
        <authorList>
            <person name="Wood D.W."/>
            <person name="Setubal J.C."/>
            <person name="Kaul R."/>
            <person name="Monks D.E."/>
            <person name="Kitajima J.P."/>
            <person name="Okura V.K."/>
            <person name="Zhou Y."/>
            <person name="Chen L."/>
            <person name="Wood G.E."/>
            <person name="Almeida N.F. Jr."/>
            <person name="Woo L."/>
            <person name="Chen Y."/>
            <person name="Paulsen I.T."/>
            <person name="Eisen J.A."/>
            <person name="Karp P.D."/>
            <person name="Bovee D. Sr."/>
            <person name="Chapman P."/>
            <person name="Clendenning J."/>
            <person name="Deatherage G."/>
            <person name="Gillet W."/>
            <person name="Grant C."/>
            <person name="Kutyavin T."/>
            <person name="Levy R."/>
            <person name="Li M.-J."/>
            <person name="McClelland E."/>
            <person name="Palmieri A."/>
            <person name="Raymond C."/>
            <person name="Rouse G."/>
            <person name="Saenphimmachak C."/>
            <person name="Wu Z."/>
            <person name="Romero P."/>
            <person name="Gordon D."/>
            <person name="Zhang S."/>
            <person name="Yoo H."/>
            <person name="Tao Y."/>
            <person name="Biddle P."/>
            <person name="Jung M."/>
            <person name="Krespan W."/>
            <person name="Perry M."/>
            <person name="Gordon-Kamm B."/>
            <person name="Liao L."/>
            <person name="Kim S."/>
            <person name="Hendrick C."/>
            <person name="Zhao Z.-Y."/>
            <person name="Dolan M."/>
            <person name="Chumley F."/>
            <person name="Tingey S.V."/>
            <person name="Tomb J.-F."/>
            <person name="Gordon M.P."/>
            <person name="Olson M.V."/>
            <person name="Nester E.W."/>
        </authorList>
    </citation>
    <scope>NUCLEOTIDE SEQUENCE [LARGE SCALE GENOMIC DNA]</scope>
    <source>
        <strain>C58 / ATCC 33970</strain>
    </source>
</reference>
<reference key="2">
    <citation type="journal article" date="2001" name="Science">
        <title>Genome sequence of the plant pathogen and biotechnology agent Agrobacterium tumefaciens C58.</title>
        <authorList>
            <person name="Goodner B."/>
            <person name="Hinkle G."/>
            <person name="Gattung S."/>
            <person name="Miller N."/>
            <person name="Blanchard M."/>
            <person name="Qurollo B."/>
            <person name="Goldman B.S."/>
            <person name="Cao Y."/>
            <person name="Askenazi M."/>
            <person name="Halling C."/>
            <person name="Mullin L."/>
            <person name="Houmiel K."/>
            <person name="Gordon J."/>
            <person name="Vaudin M."/>
            <person name="Iartchouk O."/>
            <person name="Epp A."/>
            <person name="Liu F."/>
            <person name="Wollam C."/>
            <person name="Allinger M."/>
            <person name="Doughty D."/>
            <person name="Scott C."/>
            <person name="Lappas C."/>
            <person name="Markelz B."/>
            <person name="Flanagan C."/>
            <person name="Crowell C."/>
            <person name="Gurson J."/>
            <person name="Lomo C."/>
            <person name="Sear C."/>
            <person name="Strub G."/>
            <person name="Cielo C."/>
            <person name="Slater S."/>
        </authorList>
    </citation>
    <scope>NUCLEOTIDE SEQUENCE [LARGE SCALE GENOMIC DNA]</scope>
    <source>
        <strain>C58 / ATCC 33970</strain>
    </source>
</reference>
<accession>Q8UFD5</accession>
<comment type="function">
    <text evidence="1">The glycine cleavage system catalyzes the degradation of glycine. The H protein shuttles the methylamine group of glycine from the P protein to the T protein.</text>
</comment>
<comment type="cofactor">
    <cofactor evidence="1">
        <name>(R)-lipoate</name>
        <dbReference type="ChEBI" id="CHEBI:83088"/>
    </cofactor>
    <text evidence="1">Binds 1 lipoyl cofactor covalently.</text>
</comment>
<comment type="subunit">
    <text evidence="1">The glycine cleavage system is composed of four proteins: P, T, L and H.</text>
</comment>
<comment type="similarity">
    <text evidence="1">Belongs to the GcvH family.</text>
</comment>
<dbReference type="EMBL" id="AE007869">
    <property type="protein sequence ID" value="AAK87255.1"/>
    <property type="molecule type" value="Genomic_DNA"/>
</dbReference>
<dbReference type="PIR" id="AG2756">
    <property type="entry name" value="AG2756"/>
</dbReference>
<dbReference type="PIR" id="F97537">
    <property type="entry name" value="F97537"/>
</dbReference>
<dbReference type="RefSeq" id="NP_354470.1">
    <property type="nucleotide sequence ID" value="NC_003062.2"/>
</dbReference>
<dbReference type="RefSeq" id="WP_010971640.1">
    <property type="nucleotide sequence ID" value="NC_003062.2"/>
</dbReference>
<dbReference type="SMR" id="Q8UFD5"/>
<dbReference type="STRING" id="176299.Atu1463"/>
<dbReference type="EnsemblBacteria" id="AAK87255">
    <property type="protein sequence ID" value="AAK87255"/>
    <property type="gene ID" value="Atu1463"/>
</dbReference>
<dbReference type="GeneID" id="1133501"/>
<dbReference type="KEGG" id="atu:Atu1463"/>
<dbReference type="PATRIC" id="fig|176299.10.peg.1486"/>
<dbReference type="eggNOG" id="COG0509">
    <property type="taxonomic scope" value="Bacteria"/>
</dbReference>
<dbReference type="HOGENOM" id="CLU_097408_2_0_5"/>
<dbReference type="OrthoDB" id="9796712at2"/>
<dbReference type="PhylomeDB" id="Q8UFD5"/>
<dbReference type="BioCyc" id="AGRO:ATU1463-MONOMER"/>
<dbReference type="Proteomes" id="UP000000813">
    <property type="component" value="Chromosome circular"/>
</dbReference>
<dbReference type="GO" id="GO:0005737">
    <property type="term" value="C:cytoplasm"/>
    <property type="evidence" value="ECO:0007669"/>
    <property type="project" value="TreeGrafter"/>
</dbReference>
<dbReference type="GO" id="GO:0005960">
    <property type="term" value="C:glycine cleavage complex"/>
    <property type="evidence" value="ECO:0007669"/>
    <property type="project" value="InterPro"/>
</dbReference>
<dbReference type="GO" id="GO:0019464">
    <property type="term" value="P:glycine decarboxylation via glycine cleavage system"/>
    <property type="evidence" value="ECO:0007669"/>
    <property type="project" value="UniProtKB-UniRule"/>
</dbReference>
<dbReference type="CDD" id="cd06848">
    <property type="entry name" value="GCS_H"/>
    <property type="match status" value="1"/>
</dbReference>
<dbReference type="Gene3D" id="2.40.50.100">
    <property type="match status" value="1"/>
</dbReference>
<dbReference type="HAMAP" id="MF_00272">
    <property type="entry name" value="GcvH"/>
    <property type="match status" value="1"/>
</dbReference>
<dbReference type="InterPro" id="IPR003016">
    <property type="entry name" value="2-oxoA_DH_lipoyl-BS"/>
</dbReference>
<dbReference type="InterPro" id="IPR000089">
    <property type="entry name" value="Biotin_lipoyl"/>
</dbReference>
<dbReference type="InterPro" id="IPR002930">
    <property type="entry name" value="GCV_H"/>
</dbReference>
<dbReference type="InterPro" id="IPR033753">
    <property type="entry name" value="GCV_H/Fam206"/>
</dbReference>
<dbReference type="InterPro" id="IPR017453">
    <property type="entry name" value="GCV_H_sub"/>
</dbReference>
<dbReference type="InterPro" id="IPR011053">
    <property type="entry name" value="Single_hybrid_motif"/>
</dbReference>
<dbReference type="NCBIfam" id="TIGR00527">
    <property type="entry name" value="gcvH"/>
    <property type="match status" value="1"/>
</dbReference>
<dbReference type="NCBIfam" id="NF002270">
    <property type="entry name" value="PRK01202.1"/>
    <property type="match status" value="1"/>
</dbReference>
<dbReference type="PANTHER" id="PTHR11715">
    <property type="entry name" value="GLYCINE CLEAVAGE SYSTEM H PROTEIN"/>
    <property type="match status" value="1"/>
</dbReference>
<dbReference type="PANTHER" id="PTHR11715:SF3">
    <property type="entry name" value="GLYCINE CLEAVAGE SYSTEM H PROTEIN-RELATED"/>
    <property type="match status" value="1"/>
</dbReference>
<dbReference type="Pfam" id="PF01597">
    <property type="entry name" value="GCV_H"/>
    <property type="match status" value="1"/>
</dbReference>
<dbReference type="SUPFAM" id="SSF51230">
    <property type="entry name" value="Single hybrid motif"/>
    <property type="match status" value="1"/>
</dbReference>
<dbReference type="PROSITE" id="PS50968">
    <property type="entry name" value="BIOTINYL_LIPOYL"/>
    <property type="match status" value="1"/>
</dbReference>
<dbReference type="PROSITE" id="PS00189">
    <property type="entry name" value="LIPOYL"/>
    <property type="match status" value="1"/>
</dbReference>
<name>GCSH_AGRFC</name>
<protein>
    <recommendedName>
        <fullName evidence="1">Glycine cleavage system H protein</fullName>
    </recommendedName>
</protein>